<accession>P9WMC0</accession>
<accession>L0TDZ6</accession>
<accession>P96222</accession>
<accession>Q7D4Q7</accession>
<evidence type="ECO:0000250" key="1"/>
<evidence type="ECO:0000255" key="2">
    <source>
        <dbReference type="PROSITE-ProRule" id="PRU00335"/>
    </source>
</evidence>
<evidence type="ECO:0000256" key="3">
    <source>
        <dbReference type="SAM" id="MobiDB-lite"/>
    </source>
</evidence>
<evidence type="ECO:0007829" key="4">
    <source>
        <dbReference type="PDB" id="4M3F"/>
    </source>
</evidence>
<comment type="function">
    <text evidence="1">Involved in the repression of the monooxygenase EthA which is responsible of the formation of the active metabolite of ethionamide (ETH).</text>
</comment>
<comment type="subunit">
    <text evidence="1">Homodimer.</text>
</comment>
<dbReference type="EMBL" id="AE000516">
    <property type="protein sequence ID" value="AAK48337.1"/>
    <property type="molecule type" value="Genomic_DNA"/>
</dbReference>
<dbReference type="PIR" id="D70655">
    <property type="entry name" value="D70655"/>
</dbReference>
<dbReference type="RefSeq" id="WP_003399797.1">
    <property type="nucleotide sequence ID" value="NZ_KK341227.1"/>
</dbReference>
<dbReference type="PDB" id="4M3F">
    <property type="method" value="X-ray"/>
    <property type="resolution" value="2.00 A"/>
    <property type="chains" value="A=1-216"/>
</dbReference>
<dbReference type="PDBsum" id="4M3F"/>
<dbReference type="SMR" id="P9WMC0"/>
<dbReference type="GeneID" id="45427859"/>
<dbReference type="KEGG" id="mtc:MT3970"/>
<dbReference type="PATRIC" id="fig|83331.31.peg.4269"/>
<dbReference type="HOGENOM" id="CLU_069356_32_0_11"/>
<dbReference type="Proteomes" id="UP000001020">
    <property type="component" value="Chromosome"/>
</dbReference>
<dbReference type="GO" id="GO:0003700">
    <property type="term" value="F:DNA-binding transcription factor activity"/>
    <property type="evidence" value="ECO:0007669"/>
    <property type="project" value="TreeGrafter"/>
</dbReference>
<dbReference type="GO" id="GO:0000976">
    <property type="term" value="F:transcription cis-regulatory region binding"/>
    <property type="evidence" value="ECO:0007669"/>
    <property type="project" value="TreeGrafter"/>
</dbReference>
<dbReference type="FunFam" id="1.10.357.10:FF:000027">
    <property type="entry name" value="HTH-type transcriptional regulator EthR"/>
    <property type="match status" value="1"/>
</dbReference>
<dbReference type="FunFam" id="1.10.10.60:FF:000141">
    <property type="entry name" value="TetR family transcriptional regulator"/>
    <property type="match status" value="1"/>
</dbReference>
<dbReference type="Gene3D" id="1.10.10.60">
    <property type="entry name" value="Homeodomain-like"/>
    <property type="match status" value="1"/>
</dbReference>
<dbReference type="Gene3D" id="1.10.357.10">
    <property type="entry name" value="Tetracycline Repressor, domain 2"/>
    <property type="match status" value="1"/>
</dbReference>
<dbReference type="InterPro" id="IPR049397">
    <property type="entry name" value="EthR_C"/>
</dbReference>
<dbReference type="InterPro" id="IPR009057">
    <property type="entry name" value="Homeodomain-like_sf"/>
</dbReference>
<dbReference type="InterPro" id="IPR050109">
    <property type="entry name" value="HTH-type_TetR-like_transc_reg"/>
</dbReference>
<dbReference type="InterPro" id="IPR001647">
    <property type="entry name" value="HTH_TetR"/>
</dbReference>
<dbReference type="InterPro" id="IPR036271">
    <property type="entry name" value="Tet_transcr_reg_TetR-rel_C_sf"/>
</dbReference>
<dbReference type="PANTHER" id="PTHR30055:SF184">
    <property type="entry name" value="HTH-TYPE TRANSCRIPTIONAL REGULATOR ETHR"/>
    <property type="match status" value="1"/>
</dbReference>
<dbReference type="PANTHER" id="PTHR30055">
    <property type="entry name" value="HTH-TYPE TRANSCRIPTIONAL REGULATOR RUTR"/>
    <property type="match status" value="1"/>
</dbReference>
<dbReference type="Pfam" id="PF21313">
    <property type="entry name" value="EthR_C"/>
    <property type="match status" value="1"/>
</dbReference>
<dbReference type="Pfam" id="PF00440">
    <property type="entry name" value="TetR_N"/>
    <property type="match status" value="1"/>
</dbReference>
<dbReference type="PRINTS" id="PR00455">
    <property type="entry name" value="HTHTETR"/>
</dbReference>
<dbReference type="SUPFAM" id="SSF46689">
    <property type="entry name" value="Homeodomain-like"/>
    <property type="match status" value="1"/>
</dbReference>
<dbReference type="SUPFAM" id="SSF48498">
    <property type="entry name" value="Tetracyclin repressor-like, C-terminal domain"/>
    <property type="match status" value="1"/>
</dbReference>
<dbReference type="PROSITE" id="PS50977">
    <property type="entry name" value="HTH_TETR_2"/>
    <property type="match status" value="1"/>
</dbReference>
<gene>
    <name type="primary">ethR</name>
    <name type="synonym">etaR</name>
    <name type="ordered locus">MT3970</name>
</gene>
<feature type="chain" id="PRO_0000427330" description="HTH-type transcriptional regulator EthR">
    <location>
        <begin position="1"/>
        <end position="216"/>
    </location>
</feature>
<feature type="domain" description="HTH tetR-type" evidence="2">
    <location>
        <begin position="23"/>
        <end position="83"/>
    </location>
</feature>
<feature type="DNA-binding region" description="H-T-H motif" evidence="2">
    <location>
        <begin position="46"/>
        <end position="65"/>
    </location>
</feature>
<feature type="region of interest" description="Disordered" evidence="3">
    <location>
        <begin position="1"/>
        <end position="24"/>
    </location>
</feature>
<feature type="compositionally biased region" description="Polar residues" evidence="3">
    <location>
        <begin position="1"/>
        <end position="10"/>
    </location>
</feature>
<feature type="helix" evidence="4">
    <location>
        <begin position="24"/>
        <end position="39"/>
    </location>
</feature>
<feature type="helix" evidence="4">
    <location>
        <begin position="42"/>
        <end position="44"/>
    </location>
</feature>
<feature type="helix" evidence="4">
    <location>
        <begin position="47"/>
        <end position="53"/>
    </location>
</feature>
<feature type="helix" evidence="4">
    <location>
        <begin position="58"/>
        <end position="64"/>
    </location>
</feature>
<feature type="helix" evidence="4">
    <location>
        <begin position="68"/>
        <end position="92"/>
    </location>
</feature>
<feature type="helix" evidence="4">
    <location>
        <begin position="99"/>
        <end position="115"/>
    </location>
</feature>
<feature type="helix" evidence="4">
    <location>
        <begin position="118"/>
        <end position="126"/>
    </location>
</feature>
<feature type="helix" evidence="4">
    <location>
        <begin position="127"/>
        <end position="129"/>
    </location>
</feature>
<feature type="helix" evidence="4">
    <location>
        <begin position="132"/>
        <end position="158"/>
    </location>
</feature>
<feature type="helix" evidence="4">
    <location>
        <begin position="168"/>
        <end position="187"/>
    </location>
</feature>
<feature type="helix" evidence="4">
    <location>
        <begin position="196"/>
        <end position="212"/>
    </location>
</feature>
<keyword id="KW-0002">3D-structure</keyword>
<keyword id="KW-0238">DNA-binding</keyword>
<keyword id="KW-1185">Reference proteome</keyword>
<keyword id="KW-0678">Repressor</keyword>
<keyword id="KW-0804">Transcription</keyword>
<keyword id="KW-0805">Transcription regulation</keyword>
<sequence>MTTSAASQASLPRGRRTARPSGDDRELAILATAENLLEDRPLADISVDDLAKGAGISRPTFYFYFPSKEAVLLTLLDRVVNQADMALQTLAENPADTDRENMWRTGINVFFETFGSHKAVTRAGQAARATSVEVAELWSTFMQKWIAYTAAVIDAERDRGAAPRTLPAHELATALNLMNERTLFASFAGEQPSVPEARVLDTLVHIWVTSIYGENR</sequence>
<protein>
    <recommendedName>
        <fullName>HTH-type transcriptional regulator EthR</fullName>
    </recommendedName>
</protein>
<organism>
    <name type="scientific">Mycobacterium tuberculosis (strain CDC 1551 / Oshkosh)</name>
    <dbReference type="NCBI Taxonomy" id="83331"/>
    <lineage>
        <taxon>Bacteria</taxon>
        <taxon>Bacillati</taxon>
        <taxon>Actinomycetota</taxon>
        <taxon>Actinomycetes</taxon>
        <taxon>Mycobacteriales</taxon>
        <taxon>Mycobacteriaceae</taxon>
        <taxon>Mycobacterium</taxon>
        <taxon>Mycobacterium tuberculosis complex</taxon>
    </lineage>
</organism>
<reference key="1">
    <citation type="journal article" date="2002" name="J. Bacteriol.">
        <title>Whole-genome comparison of Mycobacterium tuberculosis clinical and laboratory strains.</title>
        <authorList>
            <person name="Fleischmann R.D."/>
            <person name="Alland D."/>
            <person name="Eisen J.A."/>
            <person name="Carpenter L."/>
            <person name="White O."/>
            <person name="Peterson J.D."/>
            <person name="DeBoy R.T."/>
            <person name="Dodson R.J."/>
            <person name="Gwinn M.L."/>
            <person name="Haft D.H."/>
            <person name="Hickey E.K."/>
            <person name="Kolonay J.F."/>
            <person name="Nelson W.C."/>
            <person name="Umayam L.A."/>
            <person name="Ermolaeva M.D."/>
            <person name="Salzberg S.L."/>
            <person name="Delcher A."/>
            <person name="Utterback T.R."/>
            <person name="Weidman J.F."/>
            <person name="Khouri H.M."/>
            <person name="Gill J."/>
            <person name="Mikula A."/>
            <person name="Bishai W."/>
            <person name="Jacobs W.R. Jr."/>
            <person name="Venter J.C."/>
            <person name="Fraser C.M."/>
        </authorList>
    </citation>
    <scope>NUCLEOTIDE SEQUENCE [LARGE SCALE GENOMIC DNA]</scope>
    <source>
        <strain>CDC 1551 / Oshkosh</strain>
    </source>
</reference>
<name>ETHR_MYCTO</name>
<proteinExistence type="evidence at protein level"/>